<accession>P55630</accession>
<comment type="similarity">
    <text evidence="1">Belongs to the transposase 25 family.</text>
</comment>
<name>Y4QI_SINFN</name>
<organism>
    <name type="scientific">Sinorhizobium fredii (strain NBRC 101917 / NGR234)</name>
    <dbReference type="NCBI Taxonomy" id="394"/>
    <lineage>
        <taxon>Bacteria</taxon>
        <taxon>Pseudomonadati</taxon>
        <taxon>Pseudomonadota</taxon>
        <taxon>Alphaproteobacteria</taxon>
        <taxon>Hyphomicrobiales</taxon>
        <taxon>Rhizobiaceae</taxon>
        <taxon>Sinorhizobium/Ensifer group</taxon>
        <taxon>Sinorhizobium</taxon>
    </lineage>
</organism>
<geneLocation type="plasmid">
    <name>sym pNGR234a</name>
</geneLocation>
<gene>
    <name type="ordered locus">NGR_a01890</name>
    <name type="ORF">y4qI</name>
</gene>
<protein>
    <recommendedName>
        <fullName>Uncharacterized protein y4qI</fullName>
    </recommendedName>
</protein>
<keyword id="KW-0614">Plasmid</keyword>
<keyword id="KW-1185">Reference proteome</keyword>
<reference key="1">
    <citation type="journal article" date="1997" name="Nature">
        <title>Molecular basis of symbiosis between Rhizobium and legumes.</title>
        <authorList>
            <person name="Freiberg C.A."/>
            <person name="Fellay R."/>
            <person name="Bairoch A."/>
            <person name="Broughton W.J."/>
            <person name="Rosenthal A."/>
            <person name="Perret X."/>
        </authorList>
    </citation>
    <scope>NUCLEOTIDE SEQUENCE [LARGE SCALE GENOMIC DNA]</scope>
    <source>
        <strain>NBRC 101917 / NGR234</strain>
    </source>
</reference>
<reference key="2">
    <citation type="journal article" date="2009" name="Appl. Environ. Microbiol.">
        <title>Rhizobium sp. strain NGR234 possesses a remarkable number of secretion systems.</title>
        <authorList>
            <person name="Schmeisser C."/>
            <person name="Liesegang H."/>
            <person name="Krysciak D."/>
            <person name="Bakkou N."/>
            <person name="Le Quere A."/>
            <person name="Wollherr A."/>
            <person name="Heinemeyer I."/>
            <person name="Morgenstern B."/>
            <person name="Pommerening-Roeser A."/>
            <person name="Flores M."/>
            <person name="Palacios R."/>
            <person name="Brenner S."/>
            <person name="Gottschalk G."/>
            <person name="Schmitz R.A."/>
            <person name="Broughton W.J."/>
            <person name="Perret X."/>
            <person name="Strittmatter A.W."/>
            <person name="Streit W.R."/>
        </authorList>
    </citation>
    <scope>NUCLEOTIDE SEQUENCE [LARGE SCALE GENOMIC DNA]</scope>
    <source>
        <strain>NBRC 101917 / NGR234</strain>
    </source>
</reference>
<proteinExistence type="inferred from homology"/>
<feature type="chain" id="PRO_0000200940" description="Uncharacterized protein y4qI">
    <location>
        <begin position="1"/>
        <end position="539"/>
    </location>
</feature>
<dbReference type="EMBL" id="U00090">
    <property type="protein sequence ID" value="AAB92464.1"/>
    <property type="molecule type" value="Genomic_DNA"/>
</dbReference>
<dbReference type="RefSeq" id="NP_444036.1">
    <property type="nucleotide sequence ID" value="NC_000914.2"/>
</dbReference>
<dbReference type="RefSeq" id="WP_010875223.1">
    <property type="nucleotide sequence ID" value="NC_000914.2"/>
</dbReference>
<dbReference type="SMR" id="P55630"/>
<dbReference type="STRING" id="394.NGR_c05880"/>
<dbReference type="KEGG" id="rhi:NGR_a01890"/>
<dbReference type="PATRIC" id="fig|394.7.peg.189"/>
<dbReference type="eggNOG" id="COG4372">
    <property type="taxonomic scope" value="Bacteria"/>
</dbReference>
<dbReference type="HOGENOM" id="CLU_023034_2_0_5"/>
<dbReference type="OrthoDB" id="9800877at2"/>
<dbReference type="Proteomes" id="UP000001054">
    <property type="component" value="Plasmid pNGR234a"/>
</dbReference>
<dbReference type="InterPro" id="IPR039552">
    <property type="entry name" value="IS66_C"/>
</dbReference>
<dbReference type="InterPro" id="IPR052344">
    <property type="entry name" value="Transposase-related"/>
</dbReference>
<dbReference type="InterPro" id="IPR004291">
    <property type="entry name" value="Transposase_IS66_central"/>
</dbReference>
<dbReference type="InterPro" id="IPR024463">
    <property type="entry name" value="Transposase_TnpC_homeodom"/>
</dbReference>
<dbReference type="InterPro" id="IPR024474">
    <property type="entry name" value="Znf_dom_IS66"/>
</dbReference>
<dbReference type="NCBIfam" id="NF033517">
    <property type="entry name" value="transpos_IS66"/>
    <property type="match status" value="1"/>
</dbReference>
<dbReference type="PANTHER" id="PTHR33678">
    <property type="entry name" value="BLL1576 PROTEIN"/>
    <property type="match status" value="1"/>
</dbReference>
<dbReference type="PANTHER" id="PTHR33678:SF1">
    <property type="entry name" value="BLL1576 PROTEIN"/>
    <property type="match status" value="1"/>
</dbReference>
<dbReference type="Pfam" id="PF03050">
    <property type="entry name" value="DDE_Tnp_IS66"/>
    <property type="match status" value="1"/>
</dbReference>
<dbReference type="Pfam" id="PF13817">
    <property type="entry name" value="DDE_Tnp_IS66_C"/>
    <property type="match status" value="1"/>
</dbReference>
<dbReference type="Pfam" id="PF13007">
    <property type="entry name" value="LZ_Tnp_IS66"/>
    <property type="match status" value="1"/>
</dbReference>
<dbReference type="Pfam" id="PF13005">
    <property type="entry name" value="zf-IS66"/>
    <property type="match status" value="1"/>
</dbReference>
<sequence length="539" mass="59685">MVLPVADLPDDVDALKAMILAMAKERAANEARLAAAAAEVARLKAVEKSANERIANLTSILKVLQRTQHGTRSERLRLAVNDEQVSFAFEEVETGLSEIQSELNRAAGDKPKRAPRPRKGFAAHLERIEEVIEPEVPADCAGLEKVLIGEDRSERLDVVPPKFRVIVTRRPKYAFRGRDGVVQALAPAHLIESGLPTERLLAYIAVSKYADGLPLYRQEAIYLRDGVEVSRSLMAQWMGHLGFELQMLADYILERVKEGERVFADETTLPTLAPGSGKTTKAWLWAYARDDRPYGGTSPPMVAYRFEDGRGADCVARHLAGFSGILQVDGYSAYTNLAKARAKTGSNETIQLAGCWAHLRRKFYDLHISGVSQAATDSIIAMTELWRLEDEVRGKDAASRAELRQEKSSAIVASLFELWEKELGKVSGKSKTAEAIRYALTRREALERFLTDGRIEIDSNIVERAIRPQTITRKNSLFAGSEGGGRTWATVATLLQTCKMNGVDPLDWLSQTLTRIAQGWPASEIEALMPWNFKPDAIG</sequence>
<evidence type="ECO:0000305" key="1"/>